<protein>
    <recommendedName>
        <fullName evidence="1">Heat-inducible transcription repressor HrcA</fullName>
    </recommendedName>
</protein>
<keyword id="KW-0678">Repressor</keyword>
<keyword id="KW-0346">Stress response</keyword>
<keyword id="KW-0804">Transcription</keyword>
<keyword id="KW-0805">Transcription regulation</keyword>
<gene>
    <name evidence="1" type="primary">hrcA</name>
    <name type="ordered locus">BQ00490</name>
</gene>
<name>HRCA_BARQU</name>
<evidence type="ECO:0000255" key="1">
    <source>
        <dbReference type="HAMAP-Rule" id="MF_00081"/>
    </source>
</evidence>
<feature type="chain" id="PRO_0000182452" description="Heat-inducible transcription repressor HrcA">
    <location>
        <begin position="1"/>
        <end position="356"/>
    </location>
</feature>
<accession>Q6G1E5</accession>
<reference key="1">
    <citation type="journal article" date="2004" name="Proc. Natl. Acad. Sci. U.S.A.">
        <title>The louse-borne human pathogen Bartonella quintana is a genomic derivative of the zoonotic agent Bartonella henselae.</title>
        <authorList>
            <person name="Alsmark U.C.M."/>
            <person name="Frank A.C."/>
            <person name="Karlberg E.O."/>
            <person name="Legault B.-A."/>
            <person name="Ardell D.H."/>
            <person name="Canbaeck B."/>
            <person name="Eriksson A.-S."/>
            <person name="Naeslund A.K."/>
            <person name="Handley S.A."/>
            <person name="Huvet M."/>
            <person name="La Scola B."/>
            <person name="Holmberg M."/>
            <person name="Andersson S.G.E."/>
        </authorList>
    </citation>
    <scope>NUCLEOTIDE SEQUENCE [LARGE SCALE GENOMIC DNA]</scope>
    <source>
        <strain>Toulouse</strain>
    </source>
</reference>
<proteinExistence type="inferred from homology"/>
<comment type="function">
    <text evidence="1">Negative regulator of class I heat shock genes (grpE-dnaK-dnaJ and groELS operons). Prevents heat-shock induction of these operons.</text>
</comment>
<comment type="similarity">
    <text evidence="1">Belongs to the HrcA family.</text>
</comment>
<dbReference type="EMBL" id="BX897700">
    <property type="protein sequence ID" value="CAF25556.1"/>
    <property type="molecule type" value="Genomic_DNA"/>
</dbReference>
<dbReference type="RefSeq" id="WP_011178884.1">
    <property type="nucleotide sequence ID" value="NC_005955.1"/>
</dbReference>
<dbReference type="SMR" id="Q6G1E5"/>
<dbReference type="GeneID" id="56532440"/>
<dbReference type="KEGG" id="bqu:BQ00490"/>
<dbReference type="eggNOG" id="COG1420">
    <property type="taxonomic scope" value="Bacteria"/>
</dbReference>
<dbReference type="HOGENOM" id="CLU_050019_0_0_5"/>
<dbReference type="OrthoDB" id="9783139at2"/>
<dbReference type="Proteomes" id="UP000000597">
    <property type="component" value="Chromosome"/>
</dbReference>
<dbReference type="GO" id="GO:0003677">
    <property type="term" value="F:DNA binding"/>
    <property type="evidence" value="ECO:0007669"/>
    <property type="project" value="InterPro"/>
</dbReference>
<dbReference type="GO" id="GO:0045892">
    <property type="term" value="P:negative regulation of DNA-templated transcription"/>
    <property type="evidence" value="ECO:0007669"/>
    <property type="project" value="UniProtKB-UniRule"/>
</dbReference>
<dbReference type="Gene3D" id="3.30.450.40">
    <property type="match status" value="1"/>
</dbReference>
<dbReference type="Gene3D" id="3.30.390.60">
    <property type="entry name" value="Heat-inducible transcription repressor hrca homolog, domain 3"/>
    <property type="match status" value="1"/>
</dbReference>
<dbReference type="Gene3D" id="1.10.10.10">
    <property type="entry name" value="Winged helix-like DNA-binding domain superfamily/Winged helix DNA-binding domain"/>
    <property type="match status" value="1"/>
</dbReference>
<dbReference type="HAMAP" id="MF_00081">
    <property type="entry name" value="HrcA"/>
    <property type="match status" value="1"/>
</dbReference>
<dbReference type="InterPro" id="IPR029016">
    <property type="entry name" value="GAF-like_dom_sf"/>
</dbReference>
<dbReference type="InterPro" id="IPR002571">
    <property type="entry name" value="HrcA"/>
</dbReference>
<dbReference type="InterPro" id="IPR021153">
    <property type="entry name" value="HrcA_C"/>
</dbReference>
<dbReference type="InterPro" id="IPR036388">
    <property type="entry name" value="WH-like_DNA-bd_sf"/>
</dbReference>
<dbReference type="InterPro" id="IPR036390">
    <property type="entry name" value="WH_DNA-bd_sf"/>
</dbReference>
<dbReference type="InterPro" id="IPR005104">
    <property type="entry name" value="WHTH_HrcA_DNA-bd"/>
</dbReference>
<dbReference type="InterPro" id="IPR023120">
    <property type="entry name" value="WHTH_transcript_rep_HrcA_IDD"/>
</dbReference>
<dbReference type="NCBIfam" id="TIGR00331">
    <property type="entry name" value="hrcA"/>
    <property type="match status" value="1"/>
</dbReference>
<dbReference type="PANTHER" id="PTHR34824">
    <property type="entry name" value="HEAT-INDUCIBLE TRANSCRIPTION REPRESSOR HRCA"/>
    <property type="match status" value="1"/>
</dbReference>
<dbReference type="PANTHER" id="PTHR34824:SF1">
    <property type="entry name" value="HEAT-INDUCIBLE TRANSCRIPTION REPRESSOR HRCA"/>
    <property type="match status" value="1"/>
</dbReference>
<dbReference type="Pfam" id="PF01628">
    <property type="entry name" value="HrcA"/>
    <property type="match status" value="1"/>
</dbReference>
<dbReference type="Pfam" id="PF03444">
    <property type="entry name" value="HrcA_DNA-bdg"/>
    <property type="match status" value="1"/>
</dbReference>
<dbReference type="PIRSF" id="PIRSF005485">
    <property type="entry name" value="HrcA"/>
    <property type="match status" value="1"/>
</dbReference>
<dbReference type="SUPFAM" id="SSF55781">
    <property type="entry name" value="GAF domain-like"/>
    <property type="match status" value="1"/>
</dbReference>
<dbReference type="SUPFAM" id="SSF46785">
    <property type="entry name" value="Winged helix' DNA-binding domain"/>
    <property type="match status" value="1"/>
</dbReference>
<organism>
    <name type="scientific">Bartonella quintana (strain Toulouse)</name>
    <name type="common">Rochalimaea quintana</name>
    <dbReference type="NCBI Taxonomy" id="283165"/>
    <lineage>
        <taxon>Bacteria</taxon>
        <taxon>Pseudomonadati</taxon>
        <taxon>Pseudomonadota</taxon>
        <taxon>Alphaproteobacteria</taxon>
        <taxon>Hyphomicrobiales</taxon>
        <taxon>Bartonellaceae</taxon>
        <taxon>Bartonella</taxon>
    </lineage>
</organism>
<sequence length="356" mass="39667">MKQKPIDDELKYLDERSRDIFRHIVEAYLNDGEPVGSRNLSRLLRQTLSPATIRNVMSDLEHLGLIYAPHVSAGRMPTQSGLRFFVDAFMEAGDLPNEERESIEAQVKEAGHAQSVEHFLVQASQILSDLSRGAGLVLASKYEGTLKHIEFVRLDGQQALAVLVTQQGEVENRIVHLPKGVTHAQLTEATNFLNAHIQGRTLSEAKEEIARLCSETRAALDHLSHHLVETGLALWGGEDADHKIHLIVRGRSNLLEDVKAEEDLERLRHLFDDLETRESMAQLLDLTDEGPGVRIFIGSENKLFSLSGSSLVVAPYRDSQQRVIGALGVIGPTRLNYARIVPMVNYTAQLVSQLLR</sequence>